<accession>Q2JI33</accession>
<sequence>MDLRALIRLVPDFPRPGILFRDMTPLLQDPAGFRAAIEQLAAGTTGMGSLDYVVGIESRGFILGAALAQHLGLGFVPVRKPGKLPPPVLSQTYSLEYGQDQLQLHAHALRPGERVLIVDDVIATGGTAAATAQLVAQSGAEVGGFAFLIELAFLSGCKALPPGIPAHVVMVEEGN</sequence>
<evidence type="ECO:0000255" key="1">
    <source>
        <dbReference type="HAMAP-Rule" id="MF_00004"/>
    </source>
</evidence>
<proteinExistence type="inferred from homology"/>
<feature type="chain" id="PRO_1000000363" description="Adenine phosphoribosyltransferase">
    <location>
        <begin position="1"/>
        <end position="175"/>
    </location>
</feature>
<gene>
    <name evidence="1" type="primary">apt</name>
    <name type="ordered locus">CYB_2813</name>
</gene>
<comment type="function">
    <text evidence="1">Catalyzes a salvage reaction resulting in the formation of AMP, that is energically less costly than de novo synthesis.</text>
</comment>
<comment type="catalytic activity">
    <reaction evidence="1">
        <text>AMP + diphosphate = 5-phospho-alpha-D-ribose 1-diphosphate + adenine</text>
        <dbReference type="Rhea" id="RHEA:16609"/>
        <dbReference type="ChEBI" id="CHEBI:16708"/>
        <dbReference type="ChEBI" id="CHEBI:33019"/>
        <dbReference type="ChEBI" id="CHEBI:58017"/>
        <dbReference type="ChEBI" id="CHEBI:456215"/>
        <dbReference type="EC" id="2.4.2.7"/>
    </reaction>
</comment>
<comment type="pathway">
    <text evidence="1">Purine metabolism; AMP biosynthesis via salvage pathway; AMP from adenine: step 1/1.</text>
</comment>
<comment type="subunit">
    <text evidence="1">Homodimer.</text>
</comment>
<comment type="subcellular location">
    <subcellularLocation>
        <location evidence="1">Cytoplasm</location>
    </subcellularLocation>
</comment>
<comment type="similarity">
    <text evidence="1">Belongs to the purine/pyrimidine phosphoribosyltransferase family.</text>
</comment>
<reference key="1">
    <citation type="journal article" date="2007" name="ISME J.">
        <title>Population level functional diversity in a microbial community revealed by comparative genomic and metagenomic analyses.</title>
        <authorList>
            <person name="Bhaya D."/>
            <person name="Grossman A.R."/>
            <person name="Steunou A.-S."/>
            <person name="Khuri N."/>
            <person name="Cohan F.M."/>
            <person name="Hamamura N."/>
            <person name="Melendrez M.C."/>
            <person name="Bateson M.M."/>
            <person name="Ward D.M."/>
            <person name="Heidelberg J.F."/>
        </authorList>
    </citation>
    <scope>NUCLEOTIDE SEQUENCE [LARGE SCALE GENOMIC DNA]</scope>
    <source>
        <strain>JA-2-3B'a(2-13)</strain>
    </source>
</reference>
<keyword id="KW-0963">Cytoplasm</keyword>
<keyword id="KW-0328">Glycosyltransferase</keyword>
<keyword id="KW-0660">Purine salvage</keyword>
<keyword id="KW-1185">Reference proteome</keyword>
<keyword id="KW-0808">Transferase</keyword>
<organism>
    <name type="scientific">Synechococcus sp. (strain JA-2-3B'a(2-13))</name>
    <name type="common">Cyanobacteria bacterium Yellowstone B-Prime</name>
    <dbReference type="NCBI Taxonomy" id="321332"/>
    <lineage>
        <taxon>Bacteria</taxon>
        <taxon>Bacillati</taxon>
        <taxon>Cyanobacteriota</taxon>
        <taxon>Cyanophyceae</taxon>
        <taxon>Synechococcales</taxon>
        <taxon>Synechococcaceae</taxon>
        <taxon>Synechococcus</taxon>
    </lineage>
</organism>
<name>APT_SYNJB</name>
<protein>
    <recommendedName>
        <fullName evidence="1">Adenine phosphoribosyltransferase</fullName>
        <shortName evidence="1">APRT</shortName>
        <ecNumber evidence="1">2.4.2.7</ecNumber>
    </recommendedName>
</protein>
<dbReference type="EC" id="2.4.2.7" evidence="1"/>
<dbReference type="EMBL" id="CP000240">
    <property type="protein sequence ID" value="ABD03736.1"/>
    <property type="molecule type" value="Genomic_DNA"/>
</dbReference>
<dbReference type="RefSeq" id="WP_011434353.1">
    <property type="nucleotide sequence ID" value="NC_007776.1"/>
</dbReference>
<dbReference type="SMR" id="Q2JI33"/>
<dbReference type="STRING" id="321332.CYB_2813"/>
<dbReference type="KEGG" id="cyb:CYB_2813"/>
<dbReference type="eggNOG" id="COG0503">
    <property type="taxonomic scope" value="Bacteria"/>
</dbReference>
<dbReference type="HOGENOM" id="CLU_063339_3_0_3"/>
<dbReference type="OrthoDB" id="9803963at2"/>
<dbReference type="UniPathway" id="UPA00588">
    <property type="reaction ID" value="UER00646"/>
</dbReference>
<dbReference type="Proteomes" id="UP000001938">
    <property type="component" value="Chromosome"/>
</dbReference>
<dbReference type="GO" id="GO:0005737">
    <property type="term" value="C:cytoplasm"/>
    <property type="evidence" value="ECO:0007669"/>
    <property type="project" value="UniProtKB-SubCell"/>
</dbReference>
<dbReference type="GO" id="GO:0002055">
    <property type="term" value="F:adenine binding"/>
    <property type="evidence" value="ECO:0007669"/>
    <property type="project" value="TreeGrafter"/>
</dbReference>
<dbReference type="GO" id="GO:0003999">
    <property type="term" value="F:adenine phosphoribosyltransferase activity"/>
    <property type="evidence" value="ECO:0007669"/>
    <property type="project" value="UniProtKB-UniRule"/>
</dbReference>
<dbReference type="GO" id="GO:0016208">
    <property type="term" value="F:AMP binding"/>
    <property type="evidence" value="ECO:0007669"/>
    <property type="project" value="TreeGrafter"/>
</dbReference>
<dbReference type="GO" id="GO:0006168">
    <property type="term" value="P:adenine salvage"/>
    <property type="evidence" value="ECO:0007669"/>
    <property type="project" value="InterPro"/>
</dbReference>
<dbReference type="GO" id="GO:0044209">
    <property type="term" value="P:AMP salvage"/>
    <property type="evidence" value="ECO:0007669"/>
    <property type="project" value="UniProtKB-UniRule"/>
</dbReference>
<dbReference type="GO" id="GO:0006166">
    <property type="term" value="P:purine ribonucleoside salvage"/>
    <property type="evidence" value="ECO:0007669"/>
    <property type="project" value="UniProtKB-KW"/>
</dbReference>
<dbReference type="CDD" id="cd06223">
    <property type="entry name" value="PRTases_typeI"/>
    <property type="match status" value="1"/>
</dbReference>
<dbReference type="FunFam" id="3.40.50.2020:FF:000004">
    <property type="entry name" value="Adenine phosphoribosyltransferase"/>
    <property type="match status" value="1"/>
</dbReference>
<dbReference type="Gene3D" id="3.40.50.2020">
    <property type="match status" value="1"/>
</dbReference>
<dbReference type="HAMAP" id="MF_00004">
    <property type="entry name" value="Aden_phosphoribosyltr"/>
    <property type="match status" value="1"/>
</dbReference>
<dbReference type="InterPro" id="IPR005764">
    <property type="entry name" value="Ade_phspho_trans"/>
</dbReference>
<dbReference type="InterPro" id="IPR000836">
    <property type="entry name" value="PRibTrfase_dom"/>
</dbReference>
<dbReference type="InterPro" id="IPR029057">
    <property type="entry name" value="PRTase-like"/>
</dbReference>
<dbReference type="InterPro" id="IPR050054">
    <property type="entry name" value="UPRTase/APRTase"/>
</dbReference>
<dbReference type="NCBIfam" id="TIGR01090">
    <property type="entry name" value="apt"/>
    <property type="match status" value="1"/>
</dbReference>
<dbReference type="NCBIfam" id="NF002634">
    <property type="entry name" value="PRK02304.1-3"/>
    <property type="match status" value="1"/>
</dbReference>
<dbReference type="NCBIfam" id="NF002636">
    <property type="entry name" value="PRK02304.1-5"/>
    <property type="match status" value="1"/>
</dbReference>
<dbReference type="PANTHER" id="PTHR32315">
    <property type="entry name" value="ADENINE PHOSPHORIBOSYLTRANSFERASE"/>
    <property type="match status" value="1"/>
</dbReference>
<dbReference type="PANTHER" id="PTHR32315:SF3">
    <property type="entry name" value="ADENINE PHOSPHORIBOSYLTRANSFERASE"/>
    <property type="match status" value="1"/>
</dbReference>
<dbReference type="Pfam" id="PF00156">
    <property type="entry name" value="Pribosyltran"/>
    <property type="match status" value="1"/>
</dbReference>
<dbReference type="SUPFAM" id="SSF53271">
    <property type="entry name" value="PRTase-like"/>
    <property type="match status" value="1"/>
</dbReference>
<dbReference type="PROSITE" id="PS00103">
    <property type="entry name" value="PUR_PYR_PR_TRANSFER"/>
    <property type="match status" value="1"/>
</dbReference>